<accession>B4KTK4</accession>
<gene>
    <name evidence="1" type="primary">Ciao1</name>
    <name type="ORF">GI18956</name>
</gene>
<sequence>MGRLILEHTLQGHKGRIWGVAWHPKGNSFASCGEDKAIRIWSLSGNTWTTKTILSDGHKRTIREVRWSPCGEYLASASFDATTAIWSKHECTATLEGHENEVKSVSWSRSGGLLATCSRDKSVWIWEVAGDDEFECAAVLNAHSQDVKRVVWHPTKEILASASYDNTIKMYAESALDSDWDCTATLSSHTSTVWSIDFDADGERLVSCSDDATLKIWRAYHPGNEAGIATPDKTTVWKCVCTLSGLHTRAIYDVSWCKLTGLIASACGDDAIRIFKESSDSKRDAPSFELLTSEESAHEQDVNAVEWNPVNVGQLISCSDDGTIKIWKLQE</sequence>
<reference key="1">
    <citation type="journal article" date="2007" name="Nature">
        <title>Evolution of genes and genomes on the Drosophila phylogeny.</title>
        <authorList>
            <consortium name="Drosophila 12 genomes consortium"/>
        </authorList>
    </citation>
    <scope>NUCLEOTIDE SEQUENCE [LARGE SCALE GENOMIC DNA]</scope>
    <source>
        <strain>Tucson 15081-1352.22</strain>
    </source>
</reference>
<keyword id="KW-1185">Reference proteome</keyword>
<keyword id="KW-0677">Repeat</keyword>
<keyword id="KW-0853">WD repeat</keyword>
<dbReference type="EMBL" id="CH933808">
    <property type="protein sequence ID" value="EDW09587.1"/>
    <property type="molecule type" value="Genomic_DNA"/>
</dbReference>
<dbReference type="SMR" id="B4KTK4"/>
<dbReference type="FunCoup" id="B4KTK4">
    <property type="interactions" value="679"/>
</dbReference>
<dbReference type="EnsemblMetazoa" id="FBtr0169681">
    <property type="protein sequence ID" value="FBpp0168173"/>
    <property type="gene ID" value="FBgn0141695"/>
</dbReference>
<dbReference type="EnsemblMetazoa" id="XM_002005616.4">
    <property type="protein sequence ID" value="XP_002005652.1"/>
    <property type="gene ID" value="LOC6579773"/>
</dbReference>
<dbReference type="GeneID" id="6579773"/>
<dbReference type="KEGG" id="dmo:Dmoj_GI18956"/>
<dbReference type="CTD" id="9391"/>
<dbReference type="eggNOG" id="KOG0645">
    <property type="taxonomic scope" value="Eukaryota"/>
</dbReference>
<dbReference type="HOGENOM" id="CLU_000288_57_8_1"/>
<dbReference type="InParanoid" id="B4KTK4"/>
<dbReference type="OMA" id="IREIRWS"/>
<dbReference type="OrthoDB" id="284782at2759"/>
<dbReference type="PhylomeDB" id="B4KTK4"/>
<dbReference type="Proteomes" id="UP000009192">
    <property type="component" value="Unassembled WGS sequence"/>
</dbReference>
<dbReference type="GO" id="GO:0097361">
    <property type="term" value="C:cytosolic [4Fe-4S] assembly targeting complex"/>
    <property type="evidence" value="ECO:0007669"/>
    <property type="project" value="EnsemblMetazoa"/>
</dbReference>
<dbReference type="GO" id="GO:1902695">
    <property type="term" value="C:metallochaperone complex"/>
    <property type="evidence" value="ECO:0007669"/>
    <property type="project" value="EnsemblMetazoa"/>
</dbReference>
<dbReference type="GO" id="GO:0016226">
    <property type="term" value="P:iron-sulfur cluster assembly"/>
    <property type="evidence" value="ECO:0007669"/>
    <property type="project" value="UniProtKB-UniRule"/>
</dbReference>
<dbReference type="GO" id="GO:0051604">
    <property type="term" value="P:protein maturation"/>
    <property type="evidence" value="ECO:0000250"/>
    <property type="project" value="UniProtKB"/>
</dbReference>
<dbReference type="CDD" id="cd00200">
    <property type="entry name" value="WD40"/>
    <property type="match status" value="1"/>
</dbReference>
<dbReference type="FunFam" id="2.130.10.10:FF:000136">
    <property type="entry name" value="Probable cytosolic iron-sulfur protein assembly protein CIAO1"/>
    <property type="match status" value="1"/>
</dbReference>
<dbReference type="Gene3D" id="2.130.10.10">
    <property type="entry name" value="YVTN repeat-like/Quinoprotein amine dehydrogenase"/>
    <property type="match status" value="1"/>
</dbReference>
<dbReference type="HAMAP" id="MF_03037">
    <property type="entry name" value="ciao1"/>
    <property type="match status" value="1"/>
</dbReference>
<dbReference type="InterPro" id="IPR028608">
    <property type="entry name" value="CIAO1/Cia1"/>
</dbReference>
<dbReference type="InterPro" id="IPR020472">
    <property type="entry name" value="G-protein_beta_WD-40_rep"/>
</dbReference>
<dbReference type="InterPro" id="IPR015943">
    <property type="entry name" value="WD40/YVTN_repeat-like_dom_sf"/>
</dbReference>
<dbReference type="InterPro" id="IPR019775">
    <property type="entry name" value="WD40_repeat_CS"/>
</dbReference>
<dbReference type="InterPro" id="IPR036322">
    <property type="entry name" value="WD40_repeat_dom_sf"/>
</dbReference>
<dbReference type="InterPro" id="IPR001680">
    <property type="entry name" value="WD40_rpt"/>
</dbReference>
<dbReference type="PANTHER" id="PTHR19920:SF0">
    <property type="entry name" value="CYTOSOLIC IRON-SULFUR PROTEIN ASSEMBLY PROTEIN CIAO1-RELATED"/>
    <property type="match status" value="1"/>
</dbReference>
<dbReference type="PANTHER" id="PTHR19920">
    <property type="entry name" value="WD40 PROTEIN CIAO1"/>
    <property type="match status" value="1"/>
</dbReference>
<dbReference type="Pfam" id="PF00400">
    <property type="entry name" value="WD40"/>
    <property type="match status" value="7"/>
</dbReference>
<dbReference type="PRINTS" id="PR00320">
    <property type="entry name" value="GPROTEINBRPT"/>
</dbReference>
<dbReference type="SMART" id="SM00320">
    <property type="entry name" value="WD40"/>
    <property type="match status" value="7"/>
</dbReference>
<dbReference type="SUPFAM" id="SSF50978">
    <property type="entry name" value="WD40 repeat-like"/>
    <property type="match status" value="1"/>
</dbReference>
<dbReference type="PROSITE" id="PS00678">
    <property type="entry name" value="WD_REPEATS_1"/>
    <property type="match status" value="1"/>
</dbReference>
<dbReference type="PROSITE" id="PS50082">
    <property type="entry name" value="WD_REPEATS_2"/>
    <property type="match status" value="6"/>
</dbReference>
<dbReference type="PROSITE" id="PS50294">
    <property type="entry name" value="WD_REPEATS_REGION"/>
    <property type="match status" value="1"/>
</dbReference>
<comment type="function">
    <text evidence="1">Essential component of the cytosolic iron-sulfur (Fe/S) protein assembly machinery. Required for the maturation of extramitochondrial Fe/S proteins.</text>
</comment>
<comment type="similarity">
    <text evidence="1">Belongs to the WD repeat CIA1 family.</text>
</comment>
<proteinExistence type="inferred from homology"/>
<organism>
    <name type="scientific">Drosophila mojavensis</name>
    <name type="common">Fruit fly</name>
    <dbReference type="NCBI Taxonomy" id="7230"/>
    <lineage>
        <taxon>Eukaryota</taxon>
        <taxon>Metazoa</taxon>
        <taxon>Ecdysozoa</taxon>
        <taxon>Arthropoda</taxon>
        <taxon>Hexapoda</taxon>
        <taxon>Insecta</taxon>
        <taxon>Pterygota</taxon>
        <taxon>Neoptera</taxon>
        <taxon>Endopterygota</taxon>
        <taxon>Diptera</taxon>
        <taxon>Brachycera</taxon>
        <taxon>Muscomorpha</taxon>
        <taxon>Ephydroidea</taxon>
        <taxon>Drosophilidae</taxon>
        <taxon>Drosophila</taxon>
    </lineage>
</organism>
<name>CIAO1_DROMO</name>
<feature type="chain" id="PRO_0000382487" description="Probable cytosolic iron-sulfur protein assembly protein Ciao1">
    <location>
        <begin position="1"/>
        <end position="331"/>
    </location>
</feature>
<feature type="repeat" description="WD 1">
    <location>
        <begin position="12"/>
        <end position="51"/>
    </location>
</feature>
<feature type="repeat" description="WD 2">
    <location>
        <begin position="57"/>
        <end position="96"/>
    </location>
</feature>
<feature type="repeat" description="WD 3">
    <location>
        <begin position="97"/>
        <end position="136"/>
    </location>
</feature>
<feature type="repeat" description="WD 4">
    <location>
        <begin position="142"/>
        <end position="181"/>
    </location>
</feature>
<feature type="repeat" description="WD 5">
    <location>
        <begin position="188"/>
        <end position="227"/>
    </location>
</feature>
<feature type="repeat" description="WD 6">
    <location>
        <begin position="246"/>
        <end position="285"/>
    </location>
</feature>
<feature type="repeat" description="WD 7">
    <location>
        <begin position="297"/>
        <end position="331"/>
    </location>
</feature>
<evidence type="ECO:0000255" key="1">
    <source>
        <dbReference type="HAMAP-Rule" id="MF_03037"/>
    </source>
</evidence>
<protein>
    <recommendedName>
        <fullName evidence="1">Probable cytosolic iron-sulfur protein assembly protein Ciao1</fullName>
    </recommendedName>
</protein>